<organism>
    <name type="scientific">Escherichia coli (strain UTI89 / UPEC)</name>
    <dbReference type="NCBI Taxonomy" id="364106"/>
    <lineage>
        <taxon>Bacteria</taxon>
        <taxon>Pseudomonadati</taxon>
        <taxon>Pseudomonadota</taxon>
        <taxon>Gammaproteobacteria</taxon>
        <taxon>Enterobacterales</taxon>
        <taxon>Enterobacteriaceae</taxon>
        <taxon>Escherichia</taxon>
    </lineage>
</organism>
<evidence type="ECO:0000255" key="1">
    <source>
        <dbReference type="HAMAP-Rule" id="MF_01636"/>
    </source>
</evidence>
<feature type="chain" id="PRO_0000267664" description="3-octaprenyl-4-hydroxybenzoate carboxy-lyase">
    <location>
        <begin position="1"/>
        <end position="497"/>
    </location>
</feature>
<feature type="active site" description="Proton donor" evidence="1">
    <location>
        <position position="290"/>
    </location>
</feature>
<feature type="binding site" evidence="1">
    <location>
        <position position="175"/>
    </location>
    <ligand>
        <name>Mn(2+)</name>
        <dbReference type="ChEBI" id="CHEBI:29035"/>
    </ligand>
</feature>
<feature type="binding site" evidence="1">
    <location>
        <begin position="178"/>
        <end position="180"/>
    </location>
    <ligand>
        <name>prenylated FMN</name>
        <dbReference type="ChEBI" id="CHEBI:87746"/>
    </ligand>
</feature>
<feature type="binding site" evidence="1">
    <location>
        <begin position="192"/>
        <end position="194"/>
    </location>
    <ligand>
        <name>prenylated FMN</name>
        <dbReference type="ChEBI" id="CHEBI:87746"/>
    </ligand>
</feature>
<feature type="binding site" evidence="1">
    <location>
        <begin position="197"/>
        <end position="198"/>
    </location>
    <ligand>
        <name>prenylated FMN</name>
        <dbReference type="ChEBI" id="CHEBI:87746"/>
    </ligand>
</feature>
<feature type="binding site" evidence="1">
    <location>
        <position position="241"/>
    </location>
    <ligand>
        <name>Mn(2+)</name>
        <dbReference type="ChEBI" id="CHEBI:29035"/>
    </ligand>
</feature>
<keyword id="KW-1003">Cell membrane</keyword>
<keyword id="KW-0210">Decarboxylase</keyword>
<keyword id="KW-0285">Flavoprotein</keyword>
<keyword id="KW-0288">FMN</keyword>
<keyword id="KW-0456">Lyase</keyword>
<keyword id="KW-0464">Manganese</keyword>
<keyword id="KW-0472">Membrane</keyword>
<keyword id="KW-0479">Metal-binding</keyword>
<keyword id="KW-0831">Ubiquinone biosynthesis</keyword>
<name>UBID_ECOUT</name>
<gene>
    <name evidence="1" type="primary">ubiD</name>
    <name type="ordered locus">UTI89_C4428</name>
</gene>
<proteinExistence type="inferred from homology"/>
<comment type="function">
    <text evidence="1">Catalyzes the decarboxylation of 3-octaprenyl-4-hydroxy benzoate to 2-octaprenylphenol, an intermediate step in ubiquinone biosynthesis.</text>
</comment>
<comment type="catalytic activity">
    <reaction evidence="1">
        <text>a 4-hydroxy-3-(all-trans-polyprenyl)benzoate + H(+) = a 2-(all-trans-polyprenyl)phenol + CO2</text>
        <dbReference type="Rhea" id="RHEA:41680"/>
        <dbReference type="Rhea" id="RHEA-COMP:9514"/>
        <dbReference type="Rhea" id="RHEA-COMP:9516"/>
        <dbReference type="ChEBI" id="CHEBI:1269"/>
        <dbReference type="ChEBI" id="CHEBI:15378"/>
        <dbReference type="ChEBI" id="CHEBI:16526"/>
        <dbReference type="ChEBI" id="CHEBI:78396"/>
        <dbReference type="EC" id="4.1.1.98"/>
    </reaction>
</comment>
<comment type="cofactor">
    <cofactor evidence="1">
        <name>prenylated FMN</name>
        <dbReference type="ChEBI" id="CHEBI:87746"/>
    </cofactor>
    <text evidence="1">Binds 1 prenylated FMN per subunit.</text>
</comment>
<comment type="cofactor">
    <cofactor evidence="1">
        <name>Mn(2+)</name>
        <dbReference type="ChEBI" id="CHEBI:29035"/>
    </cofactor>
</comment>
<comment type="pathway">
    <text evidence="1">Cofactor biosynthesis; ubiquinone biosynthesis.</text>
</comment>
<comment type="subunit">
    <text evidence="1">Homohexamer.</text>
</comment>
<comment type="subcellular location">
    <subcellularLocation>
        <location evidence="1">Cell membrane</location>
        <topology evidence="1">Peripheral membrane protein</topology>
    </subcellularLocation>
</comment>
<comment type="similarity">
    <text evidence="1">Belongs to the UbiD family.</text>
</comment>
<reference key="1">
    <citation type="journal article" date="2006" name="Proc. Natl. Acad. Sci. U.S.A.">
        <title>Identification of genes subject to positive selection in uropathogenic strains of Escherichia coli: a comparative genomics approach.</title>
        <authorList>
            <person name="Chen S.L."/>
            <person name="Hung C.-S."/>
            <person name="Xu J."/>
            <person name="Reigstad C.S."/>
            <person name="Magrini V."/>
            <person name="Sabo A."/>
            <person name="Blasiar D."/>
            <person name="Bieri T."/>
            <person name="Meyer R.R."/>
            <person name="Ozersky P."/>
            <person name="Armstrong J.R."/>
            <person name="Fulton R.S."/>
            <person name="Latreille J.P."/>
            <person name="Spieth J."/>
            <person name="Hooton T.M."/>
            <person name="Mardis E.R."/>
            <person name="Hultgren S.J."/>
            <person name="Gordon J.I."/>
        </authorList>
    </citation>
    <scope>NUCLEOTIDE SEQUENCE [LARGE SCALE GENOMIC DNA]</scope>
    <source>
        <strain>UTI89 / UPEC</strain>
    </source>
</reference>
<dbReference type="EC" id="4.1.1.98" evidence="1"/>
<dbReference type="EMBL" id="CP000243">
    <property type="protein sequence ID" value="ABE09845.1"/>
    <property type="molecule type" value="Genomic_DNA"/>
</dbReference>
<dbReference type="RefSeq" id="WP_000339804.1">
    <property type="nucleotide sequence ID" value="NZ_CP064825.1"/>
</dbReference>
<dbReference type="SMR" id="Q1R469"/>
<dbReference type="GeneID" id="93778094"/>
<dbReference type="KEGG" id="eci:UTI89_C4428"/>
<dbReference type="HOGENOM" id="CLU_023348_4_1_6"/>
<dbReference type="UniPathway" id="UPA00232"/>
<dbReference type="Proteomes" id="UP000001952">
    <property type="component" value="Chromosome"/>
</dbReference>
<dbReference type="GO" id="GO:0005829">
    <property type="term" value="C:cytosol"/>
    <property type="evidence" value="ECO:0007669"/>
    <property type="project" value="TreeGrafter"/>
</dbReference>
<dbReference type="GO" id="GO:0005886">
    <property type="term" value="C:plasma membrane"/>
    <property type="evidence" value="ECO:0007669"/>
    <property type="project" value="UniProtKB-SubCell"/>
</dbReference>
<dbReference type="GO" id="GO:0008694">
    <property type="term" value="F:3-octaprenyl-4-hydroxybenzoate carboxy-lyase activity"/>
    <property type="evidence" value="ECO:0007669"/>
    <property type="project" value="UniProtKB-UniRule"/>
</dbReference>
<dbReference type="GO" id="GO:0046872">
    <property type="term" value="F:metal ion binding"/>
    <property type="evidence" value="ECO:0007669"/>
    <property type="project" value="UniProtKB-KW"/>
</dbReference>
<dbReference type="GO" id="GO:0006744">
    <property type="term" value="P:ubiquinone biosynthetic process"/>
    <property type="evidence" value="ECO:0007669"/>
    <property type="project" value="UniProtKB-UniRule"/>
</dbReference>
<dbReference type="FunFam" id="1.20.5.570:FF:000001">
    <property type="entry name" value="3-octaprenyl-4-hydroxybenzoate carboxy-lyase"/>
    <property type="match status" value="1"/>
</dbReference>
<dbReference type="FunFam" id="3.40.1670.10:FF:000001">
    <property type="entry name" value="3-octaprenyl-4-hydroxybenzoate carboxy-lyase"/>
    <property type="match status" value="1"/>
</dbReference>
<dbReference type="Gene3D" id="1.20.5.570">
    <property type="entry name" value="Single helix bin"/>
    <property type="match status" value="1"/>
</dbReference>
<dbReference type="Gene3D" id="3.40.1670.10">
    <property type="entry name" value="UbiD C-terminal domain-like"/>
    <property type="match status" value="1"/>
</dbReference>
<dbReference type="HAMAP" id="MF_01636">
    <property type="entry name" value="UbiD"/>
    <property type="match status" value="1"/>
</dbReference>
<dbReference type="InterPro" id="IPR002830">
    <property type="entry name" value="UbiD"/>
</dbReference>
<dbReference type="InterPro" id="IPR049381">
    <property type="entry name" value="UbiD-like_C"/>
</dbReference>
<dbReference type="InterPro" id="IPR049383">
    <property type="entry name" value="UbiD-like_N"/>
</dbReference>
<dbReference type="InterPro" id="IPR023677">
    <property type="entry name" value="UbiD_bacteria"/>
</dbReference>
<dbReference type="InterPro" id="IPR048304">
    <property type="entry name" value="UbiD_Rift_dom"/>
</dbReference>
<dbReference type="NCBIfam" id="NF008175">
    <property type="entry name" value="PRK10922.1"/>
    <property type="match status" value="1"/>
</dbReference>
<dbReference type="NCBIfam" id="TIGR00148">
    <property type="entry name" value="UbiD family decarboxylase"/>
    <property type="match status" value="1"/>
</dbReference>
<dbReference type="PANTHER" id="PTHR30108">
    <property type="entry name" value="3-OCTAPRENYL-4-HYDROXYBENZOATE CARBOXY-LYASE-RELATED"/>
    <property type="match status" value="1"/>
</dbReference>
<dbReference type="PANTHER" id="PTHR30108:SF17">
    <property type="entry name" value="FERULIC ACID DECARBOXYLASE 1"/>
    <property type="match status" value="1"/>
</dbReference>
<dbReference type="Pfam" id="PF01977">
    <property type="entry name" value="UbiD"/>
    <property type="match status" value="1"/>
</dbReference>
<dbReference type="Pfam" id="PF20696">
    <property type="entry name" value="UbiD_C"/>
    <property type="match status" value="1"/>
</dbReference>
<dbReference type="Pfam" id="PF20695">
    <property type="entry name" value="UbiD_N"/>
    <property type="match status" value="1"/>
</dbReference>
<dbReference type="SUPFAM" id="SSF50475">
    <property type="entry name" value="FMN-binding split barrel"/>
    <property type="match status" value="1"/>
</dbReference>
<dbReference type="SUPFAM" id="SSF143968">
    <property type="entry name" value="UbiD C-terminal domain-like"/>
    <property type="match status" value="1"/>
</dbReference>
<sequence>MDAMKYNDLRDFLTLLEQQGELKRITLPVDPHLEITEIADRTLRAGGPALLFENPKGYSMPVLCNLFGTPKRVAMGMGQEDVSALREVGKLLAFLKEPEPPKGFRDLFDKLPQFKQVLNMPTKRLRGAPCQQKIVSGDDVDLNRIPIMTCWPEDAAPLITWGLTVTRGPHKERQNLGIYRQQLIGKNKLIMRWLSHRGGALDYQEWCAAHPGERFPVSVALGADPATILGAVTPVPDTLSEYAFAGLLRGTKTEVVKCISNDLEVPASAEIVLEGYIEQGETAPEGPYGDHTGYYNEVDSFPVFTVTHITQREDAIYHSTYTGRPPDEPAVLGVALNEVFVPILQKQFPEIVDFYLPPEGCSYRLAVVTIKKQYAGHAKRVMMGVWSFLRQFMYTKFVIVCDDDVNARDWNDVIWAITTRMDPARDTVLVENTPIDYLDFASPVSGLGSKMGLDATNKWPGETQREWGRPIKKDPDVVAHIDAIWDELAIFNNGKSA</sequence>
<accession>Q1R469</accession>
<protein>
    <recommendedName>
        <fullName evidence="1">3-octaprenyl-4-hydroxybenzoate carboxy-lyase</fullName>
        <ecNumber evidence="1">4.1.1.98</ecNumber>
    </recommendedName>
    <alternativeName>
        <fullName evidence="1">Polyprenyl p-hydroxybenzoate decarboxylase</fullName>
    </alternativeName>
</protein>